<feature type="chain" id="PRO_0000381145" description="8-amino-7-oxononanoate synthase">
    <location>
        <begin position="1"/>
        <end position="401"/>
    </location>
</feature>
<feature type="binding site" evidence="1">
    <location>
        <position position="24"/>
    </location>
    <ligand>
        <name>substrate</name>
    </ligand>
</feature>
<feature type="binding site" evidence="1">
    <location>
        <begin position="111"/>
        <end position="112"/>
    </location>
    <ligand>
        <name>pyridoxal 5'-phosphate</name>
        <dbReference type="ChEBI" id="CHEBI:597326"/>
    </ligand>
</feature>
<feature type="binding site" evidence="1">
    <location>
        <position position="137"/>
    </location>
    <ligand>
        <name>substrate</name>
    </ligand>
</feature>
<feature type="binding site" evidence="1">
    <location>
        <position position="183"/>
    </location>
    <ligand>
        <name>pyridoxal 5'-phosphate</name>
        <dbReference type="ChEBI" id="CHEBI:597326"/>
    </ligand>
</feature>
<feature type="binding site" evidence="1">
    <location>
        <position position="211"/>
    </location>
    <ligand>
        <name>pyridoxal 5'-phosphate</name>
        <dbReference type="ChEBI" id="CHEBI:597326"/>
    </ligand>
</feature>
<feature type="binding site" evidence="1">
    <location>
        <position position="240"/>
    </location>
    <ligand>
        <name>pyridoxal 5'-phosphate</name>
        <dbReference type="ChEBI" id="CHEBI:597326"/>
    </ligand>
</feature>
<feature type="binding site" evidence="1">
    <location>
        <position position="357"/>
    </location>
    <ligand>
        <name>substrate</name>
    </ligand>
</feature>
<feature type="modified residue" description="N6-(pyridoxal phosphate)lysine" evidence="1">
    <location>
        <position position="243"/>
    </location>
</feature>
<gene>
    <name evidence="1" type="primary">bioF</name>
    <name type="ordered locus">XOO0420</name>
</gene>
<name>BIOF_XANOM</name>
<accession>Q2P8F2</accession>
<keyword id="KW-0093">Biotin biosynthesis</keyword>
<keyword id="KW-0663">Pyridoxal phosphate</keyword>
<keyword id="KW-0808">Transferase</keyword>
<sequence>MARPDLHGRISSLRKLHVAQDRVRVRRQVGRRDGVRLEIDGRWLTGFCSNDYLGLSQQFEVIAALQDAAARDGAGATASHLICGHHTAHETLEREIAEWLGYPSALLFGNGFIANLAVQQALLSEEDDVCVQDRLNHASLLDATRLAGCRLRRYPHLDVEGAMRQLKGAPEGAAMLASDAVFSMDGDVAPLRALSLVARMQDALFYVDDAHGVGVLGPQGRGCVADAGLGVAEVPLQLVTLGKALGGYGAVVVGDDALVRHLAETARPYIYTTALPPAQVAATLAAVRLARRDDWRRARLVELIAAFRDGARKHGFELMASDTPIQPLLCGEEATVMAMSAALEQAGFMVGAIRPPTVPEGKARLRVTLSALHTPQQVQALIDAIVQARDVVSRQPLRASA</sequence>
<protein>
    <recommendedName>
        <fullName evidence="1">8-amino-7-oxononanoate synthase</fullName>
        <shortName evidence="1">AONS</shortName>
        <ecNumber evidence="1">2.3.1.47</ecNumber>
    </recommendedName>
    <alternativeName>
        <fullName evidence="1">7-keto-8-amino-pelargonic acid synthase</fullName>
        <shortName evidence="1">7-KAP synthase</shortName>
        <shortName evidence="1">KAPA synthase</shortName>
    </alternativeName>
    <alternativeName>
        <fullName evidence="1">8-amino-7-ketopelargonate synthase</fullName>
    </alternativeName>
</protein>
<proteinExistence type="inferred from homology"/>
<comment type="function">
    <text evidence="1">Catalyzes the decarboxylative condensation of pimeloyl-[acyl-carrier protein] and L-alanine to produce 8-amino-7-oxononanoate (AON), [acyl-carrier protein], and carbon dioxide.</text>
</comment>
<comment type="catalytic activity">
    <reaction evidence="1">
        <text>6-carboxyhexanoyl-[ACP] + L-alanine + H(+) = (8S)-8-amino-7-oxononanoate + holo-[ACP] + CO2</text>
        <dbReference type="Rhea" id="RHEA:42288"/>
        <dbReference type="Rhea" id="RHEA-COMP:9685"/>
        <dbReference type="Rhea" id="RHEA-COMP:9955"/>
        <dbReference type="ChEBI" id="CHEBI:15378"/>
        <dbReference type="ChEBI" id="CHEBI:16526"/>
        <dbReference type="ChEBI" id="CHEBI:57972"/>
        <dbReference type="ChEBI" id="CHEBI:64479"/>
        <dbReference type="ChEBI" id="CHEBI:78846"/>
        <dbReference type="ChEBI" id="CHEBI:149468"/>
        <dbReference type="EC" id="2.3.1.47"/>
    </reaction>
</comment>
<comment type="cofactor">
    <cofactor evidence="1">
        <name>pyridoxal 5'-phosphate</name>
        <dbReference type="ChEBI" id="CHEBI:597326"/>
    </cofactor>
</comment>
<comment type="pathway">
    <text evidence="1">Cofactor biosynthesis; biotin biosynthesis.</text>
</comment>
<comment type="subunit">
    <text evidence="1">Homodimer.</text>
</comment>
<comment type="similarity">
    <text evidence="1">Belongs to the class-II pyridoxal-phosphate-dependent aminotransferase family. BioF subfamily.</text>
</comment>
<reference key="1">
    <citation type="journal article" date="2005" name="Jpn. Agric. Res. Q.">
        <title>Genome sequence of Xanthomonas oryzae pv. oryzae suggests contribution of large numbers of effector genes and insertion sequences to its race diversity.</title>
        <authorList>
            <person name="Ochiai H."/>
            <person name="Inoue Y."/>
            <person name="Takeya M."/>
            <person name="Sasaki A."/>
            <person name="Kaku H."/>
        </authorList>
    </citation>
    <scope>NUCLEOTIDE SEQUENCE [LARGE SCALE GENOMIC DNA]</scope>
    <source>
        <strain>MAFF 311018</strain>
    </source>
</reference>
<evidence type="ECO:0000255" key="1">
    <source>
        <dbReference type="HAMAP-Rule" id="MF_01693"/>
    </source>
</evidence>
<dbReference type="EC" id="2.3.1.47" evidence="1"/>
<dbReference type="EMBL" id="AP008229">
    <property type="protein sequence ID" value="BAE67175.1"/>
    <property type="molecule type" value="Genomic_DNA"/>
</dbReference>
<dbReference type="SMR" id="Q2P8F2"/>
<dbReference type="KEGG" id="xom:XOO0420"/>
<dbReference type="HOGENOM" id="CLU_015846_11_2_6"/>
<dbReference type="UniPathway" id="UPA00078"/>
<dbReference type="GO" id="GO:0008710">
    <property type="term" value="F:8-amino-7-oxononanoate synthase activity"/>
    <property type="evidence" value="ECO:0007669"/>
    <property type="project" value="UniProtKB-UniRule"/>
</dbReference>
<dbReference type="GO" id="GO:0030170">
    <property type="term" value="F:pyridoxal phosphate binding"/>
    <property type="evidence" value="ECO:0007669"/>
    <property type="project" value="UniProtKB-UniRule"/>
</dbReference>
<dbReference type="GO" id="GO:0009102">
    <property type="term" value="P:biotin biosynthetic process"/>
    <property type="evidence" value="ECO:0007669"/>
    <property type="project" value="UniProtKB-UniRule"/>
</dbReference>
<dbReference type="Gene3D" id="3.90.1150.10">
    <property type="entry name" value="Aspartate Aminotransferase, domain 1"/>
    <property type="match status" value="1"/>
</dbReference>
<dbReference type="Gene3D" id="3.40.640.10">
    <property type="entry name" value="Type I PLP-dependent aspartate aminotransferase-like (Major domain)"/>
    <property type="match status" value="1"/>
</dbReference>
<dbReference type="HAMAP" id="MF_01693">
    <property type="entry name" value="BioF_aminotrans_2"/>
    <property type="match status" value="1"/>
</dbReference>
<dbReference type="InterPro" id="IPR004839">
    <property type="entry name" value="Aminotransferase_I/II_large"/>
</dbReference>
<dbReference type="InterPro" id="IPR050087">
    <property type="entry name" value="AON_synthase_class-II"/>
</dbReference>
<dbReference type="InterPro" id="IPR004723">
    <property type="entry name" value="AONS_Archaea/Proteobacteria"/>
</dbReference>
<dbReference type="InterPro" id="IPR022834">
    <property type="entry name" value="AONS_Proteobacteria"/>
</dbReference>
<dbReference type="InterPro" id="IPR015424">
    <property type="entry name" value="PyrdxlP-dep_Trfase"/>
</dbReference>
<dbReference type="InterPro" id="IPR015421">
    <property type="entry name" value="PyrdxlP-dep_Trfase_major"/>
</dbReference>
<dbReference type="InterPro" id="IPR015422">
    <property type="entry name" value="PyrdxlP-dep_Trfase_small"/>
</dbReference>
<dbReference type="NCBIfam" id="TIGR00858">
    <property type="entry name" value="bioF"/>
    <property type="match status" value="1"/>
</dbReference>
<dbReference type="PANTHER" id="PTHR13693:SF100">
    <property type="entry name" value="8-AMINO-7-OXONONANOATE SYNTHASE"/>
    <property type="match status" value="1"/>
</dbReference>
<dbReference type="PANTHER" id="PTHR13693">
    <property type="entry name" value="CLASS II AMINOTRANSFERASE/8-AMINO-7-OXONONANOATE SYNTHASE"/>
    <property type="match status" value="1"/>
</dbReference>
<dbReference type="Pfam" id="PF00155">
    <property type="entry name" value="Aminotran_1_2"/>
    <property type="match status" value="1"/>
</dbReference>
<dbReference type="SUPFAM" id="SSF53383">
    <property type="entry name" value="PLP-dependent transferases"/>
    <property type="match status" value="1"/>
</dbReference>
<dbReference type="PROSITE" id="PS00599">
    <property type="entry name" value="AA_TRANSFER_CLASS_2"/>
    <property type="match status" value="1"/>
</dbReference>
<organism>
    <name type="scientific">Xanthomonas oryzae pv. oryzae (strain MAFF 311018)</name>
    <dbReference type="NCBI Taxonomy" id="342109"/>
    <lineage>
        <taxon>Bacteria</taxon>
        <taxon>Pseudomonadati</taxon>
        <taxon>Pseudomonadota</taxon>
        <taxon>Gammaproteobacteria</taxon>
        <taxon>Lysobacterales</taxon>
        <taxon>Lysobacteraceae</taxon>
        <taxon>Xanthomonas</taxon>
    </lineage>
</organism>